<name>RNPA_BORT9</name>
<accession>A1QZM7</accession>
<dbReference type="EC" id="3.1.26.5" evidence="1"/>
<dbReference type="EMBL" id="CP000049">
    <property type="protein sequence ID" value="AAX17769.1"/>
    <property type="molecule type" value="Genomic_DNA"/>
</dbReference>
<dbReference type="RefSeq" id="WP_011772388.1">
    <property type="nucleotide sequence ID" value="NC_008710.1"/>
</dbReference>
<dbReference type="SMR" id="A1QZM7"/>
<dbReference type="KEGG" id="btu:BT0441"/>
<dbReference type="eggNOG" id="COG0594">
    <property type="taxonomic scope" value="Bacteria"/>
</dbReference>
<dbReference type="HOGENOM" id="CLU_2116283_0_0_12"/>
<dbReference type="Proteomes" id="UP000001205">
    <property type="component" value="Chromosome"/>
</dbReference>
<dbReference type="GO" id="GO:0004526">
    <property type="term" value="F:ribonuclease P activity"/>
    <property type="evidence" value="ECO:0007669"/>
    <property type="project" value="UniProtKB-UniRule"/>
</dbReference>
<dbReference type="GO" id="GO:0000049">
    <property type="term" value="F:tRNA binding"/>
    <property type="evidence" value="ECO:0007669"/>
    <property type="project" value="UniProtKB-UniRule"/>
</dbReference>
<dbReference type="GO" id="GO:0001682">
    <property type="term" value="P:tRNA 5'-leader removal"/>
    <property type="evidence" value="ECO:0007669"/>
    <property type="project" value="UniProtKB-UniRule"/>
</dbReference>
<dbReference type="Gene3D" id="3.30.230.10">
    <property type="match status" value="1"/>
</dbReference>
<dbReference type="HAMAP" id="MF_00227">
    <property type="entry name" value="RNase_P"/>
    <property type="match status" value="1"/>
</dbReference>
<dbReference type="InterPro" id="IPR020568">
    <property type="entry name" value="Ribosomal_Su5_D2-typ_SF"/>
</dbReference>
<dbReference type="InterPro" id="IPR014721">
    <property type="entry name" value="Ribsml_uS5_D2-typ_fold_subgr"/>
</dbReference>
<dbReference type="InterPro" id="IPR000100">
    <property type="entry name" value="RNase_P"/>
</dbReference>
<dbReference type="NCBIfam" id="TIGR00188">
    <property type="entry name" value="rnpA"/>
    <property type="match status" value="1"/>
</dbReference>
<dbReference type="Pfam" id="PF00825">
    <property type="entry name" value="Ribonuclease_P"/>
    <property type="match status" value="1"/>
</dbReference>
<dbReference type="SUPFAM" id="SSF54211">
    <property type="entry name" value="Ribosomal protein S5 domain 2-like"/>
    <property type="match status" value="1"/>
</dbReference>
<sequence length="114" mass="13781">MKKRNISIKSKVEIQELFKKGRFIRIEGINIFYEFTSLSISRMIVTFPKVFKGAVKRNRVRRIFKECFRKQLALLKNRYVDFIFVVYPQRVDVNYCEVDTMLKNIIVHVMKRKV</sequence>
<keyword id="KW-0255">Endonuclease</keyword>
<keyword id="KW-0378">Hydrolase</keyword>
<keyword id="KW-0540">Nuclease</keyword>
<keyword id="KW-1185">Reference proteome</keyword>
<keyword id="KW-0694">RNA-binding</keyword>
<keyword id="KW-0819">tRNA processing</keyword>
<comment type="function">
    <text evidence="1">RNaseP catalyzes the removal of the 5'-leader sequence from pre-tRNA to produce the mature 5'-terminus. It can also cleave other RNA substrates such as 4.5S RNA. The protein component plays an auxiliary but essential role in vivo by binding to the 5'-leader sequence and broadening the substrate specificity of the ribozyme.</text>
</comment>
<comment type="catalytic activity">
    <reaction evidence="1">
        <text>Endonucleolytic cleavage of RNA, removing 5'-extranucleotides from tRNA precursor.</text>
        <dbReference type="EC" id="3.1.26.5"/>
    </reaction>
</comment>
<comment type="subunit">
    <text evidence="1">Consists of a catalytic RNA component (M1 or rnpB) and a protein subunit.</text>
</comment>
<comment type="similarity">
    <text evidence="1">Belongs to the RnpA family.</text>
</comment>
<reference key="1">
    <citation type="submission" date="2004-12" db="EMBL/GenBank/DDBJ databases">
        <title>The genome sequence of Borrelia hermsii and Borrelia turicatae: comparative analysis of two agents of endemic N. America relapsing fever.</title>
        <authorList>
            <person name="Porcella S.F."/>
            <person name="Raffel S.J."/>
            <person name="Schrumpf M.E."/>
            <person name="Montgomery B."/>
            <person name="Smith T."/>
            <person name="Schwan T.G."/>
        </authorList>
    </citation>
    <scope>NUCLEOTIDE SEQUENCE [LARGE SCALE GENOMIC DNA]</scope>
    <source>
        <strain>91E135</strain>
    </source>
</reference>
<gene>
    <name evidence="1" type="primary">rnpA</name>
    <name type="ordered locus">BT0441</name>
</gene>
<organism>
    <name type="scientific">Borrelia turicatae (strain 91E135)</name>
    <dbReference type="NCBI Taxonomy" id="314724"/>
    <lineage>
        <taxon>Bacteria</taxon>
        <taxon>Pseudomonadati</taxon>
        <taxon>Spirochaetota</taxon>
        <taxon>Spirochaetia</taxon>
        <taxon>Spirochaetales</taxon>
        <taxon>Borreliaceae</taxon>
        <taxon>Borrelia</taxon>
    </lineage>
</organism>
<evidence type="ECO:0000255" key="1">
    <source>
        <dbReference type="HAMAP-Rule" id="MF_00227"/>
    </source>
</evidence>
<proteinExistence type="inferred from homology"/>
<protein>
    <recommendedName>
        <fullName evidence="1">Ribonuclease P protein component</fullName>
        <shortName evidence="1">RNase P protein</shortName>
        <shortName evidence="1">RNaseP protein</shortName>
        <ecNumber evidence="1">3.1.26.5</ecNumber>
    </recommendedName>
    <alternativeName>
        <fullName evidence="1">Protein C5</fullName>
    </alternativeName>
</protein>
<feature type="chain" id="PRO_1000194616" description="Ribonuclease P protein component">
    <location>
        <begin position="1"/>
        <end position="114"/>
    </location>
</feature>